<dbReference type="EC" id="2.7.4.8" evidence="1"/>
<dbReference type="EMBL" id="BA000017">
    <property type="protein sequence ID" value="BAB57371.1"/>
    <property type="molecule type" value="Genomic_DNA"/>
</dbReference>
<dbReference type="RefSeq" id="WP_000368226.1">
    <property type="nucleotide sequence ID" value="NC_002758.2"/>
</dbReference>
<dbReference type="SMR" id="P65219"/>
<dbReference type="KEGG" id="sav:SAV1209"/>
<dbReference type="HOGENOM" id="CLU_001715_1_2_9"/>
<dbReference type="PhylomeDB" id="P65219"/>
<dbReference type="Proteomes" id="UP000002481">
    <property type="component" value="Chromosome"/>
</dbReference>
<dbReference type="GO" id="GO:0005829">
    <property type="term" value="C:cytosol"/>
    <property type="evidence" value="ECO:0007669"/>
    <property type="project" value="TreeGrafter"/>
</dbReference>
<dbReference type="GO" id="GO:0005524">
    <property type="term" value="F:ATP binding"/>
    <property type="evidence" value="ECO:0007669"/>
    <property type="project" value="UniProtKB-UniRule"/>
</dbReference>
<dbReference type="GO" id="GO:0004385">
    <property type="term" value="F:guanylate kinase activity"/>
    <property type="evidence" value="ECO:0007669"/>
    <property type="project" value="UniProtKB-UniRule"/>
</dbReference>
<dbReference type="CDD" id="cd00071">
    <property type="entry name" value="GMPK"/>
    <property type="match status" value="1"/>
</dbReference>
<dbReference type="FunFam" id="3.40.50.300:FF:000855">
    <property type="entry name" value="Guanylate kinase"/>
    <property type="match status" value="1"/>
</dbReference>
<dbReference type="FunFam" id="3.30.63.10:FF:000002">
    <property type="entry name" value="Guanylate kinase 1"/>
    <property type="match status" value="1"/>
</dbReference>
<dbReference type="Gene3D" id="3.30.63.10">
    <property type="entry name" value="Guanylate Kinase phosphate binding domain"/>
    <property type="match status" value="1"/>
</dbReference>
<dbReference type="Gene3D" id="3.40.50.300">
    <property type="entry name" value="P-loop containing nucleotide triphosphate hydrolases"/>
    <property type="match status" value="1"/>
</dbReference>
<dbReference type="HAMAP" id="MF_00328">
    <property type="entry name" value="Guanylate_kinase"/>
    <property type="match status" value="1"/>
</dbReference>
<dbReference type="InterPro" id="IPR008145">
    <property type="entry name" value="GK/Ca_channel_bsu"/>
</dbReference>
<dbReference type="InterPro" id="IPR008144">
    <property type="entry name" value="Guanylate_kin-like_dom"/>
</dbReference>
<dbReference type="InterPro" id="IPR017665">
    <property type="entry name" value="Guanylate_kinase"/>
</dbReference>
<dbReference type="InterPro" id="IPR020590">
    <property type="entry name" value="Guanylate_kinase_CS"/>
</dbReference>
<dbReference type="InterPro" id="IPR027417">
    <property type="entry name" value="P-loop_NTPase"/>
</dbReference>
<dbReference type="NCBIfam" id="TIGR03263">
    <property type="entry name" value="guanyl_kin"/>
    <property type="match status" value="1"/>
</dbReference>
<dbReference type="PANTHER" id="PTHR23117:SF13">
    <property type="entry name" value="GUANYLATE KINASE"/>
    <property type="match status" value="1"/>
</dbReference>
<dbReference type="PANTHER" id="PTHR23117">
    <property type="entry name" value="GUANYLATE KINASE-RELATED"/>
    <property type="match status" value="1"/>
</dbReference>
<dbReference type="Pfam" id="PF00625">
    <property type="entry name" value="Guanylate_kin"/>
    <property type="match status" value="1"/>
</dbReference>
<dbReference type="SMART" id="SM00072">
    <property type="entry name" value="GuKc"/>
    <property type="match status" value="1"/>
</dbReference>
<dbReference type="SUPFAM" id="SSF52540">
    <property type="entry name" value="P-loop containing nucleoside triphosphate hydrolases"/>
    <property type="match status" value="1"/>
</dbReference>
<dbReference type="PROSITE" id="PS00856">
    <property type="entry name" value="GUANYLATE_KINASE_1"/>
    <property type="match status" value="1"/>
</dbReference>
<dbReference type="PROSITE" id="PS50052">
    <property type="entry name" value="GUANYLATE_KINASE_2"/>
    <property type="match status" value="1"/>
</dbReference>
<gene>
    <name evidence="1" type="primary">gmk</name>
    <name type="ordered locus">SAV1209</name>
</gene>
<feature type="chain" id="PRO_0000170604" description="Guanylate kinase">
    <location>
        <begin position="1"/>
        <end position="207"/>
    </location>
</feature>
<feature type="domain" description="Guanylate kinase-like" evidence="1">
    <location>
        <begin position="6"/>
        <end position="185"/>
    </location>
</feature>
<feature type="binding site" evidence="1">
    <location>
        <begin position="13"/>
        <end position="20"/>
    </location>
    <ligand>
        <name>ATP</name>
        <dbReference type="ChEBI" id="CHEBI:30616"/>
    </ligand>
</feature>
<name>KGUA_STAAM</name>
<proteinExistence type="inferred from homology"/>
<keyword id="KW-0067">ATP-binding</keyword>
<keyword id="KW-0963">Cytoplasm</keyword>
<keyword id="KW-0418">Kinase</keyword>
<keyword id="KW-0547">Nucleotide-binding</keyword>
<keyword id="KW-0808">Transferase</keyword>
<accession>P65219</accession>
<accession>Q99UQ9</accession>
<reference key="1">
    <citation type="journal article" date="2001" name="Lancet">
        <title>Whole genome sequencing of meticillin-resistant Staphylococcus aureus.</title>
        <authorList>
            <person name="Kuroda M."/>
            <person name="Ohta T."/>
            <person name="Uchiyama I."/>
            <person name="Baba T."/>
            <person name="Yuzawa H."/>
            <person name="Kobayashi I."/>
            <person name="Cui L."/>
            <person name="Oguchi A."/>
            <person name="Aoki K."/>
            <person name="Nagai Y."/>
            <person name="Lian J.-Q."/>
            <person name="Ito T."/>
            <person name="Kanamori M."/>
            <person name="Matsumaru H."/>
            <person name="Maruyama A."/>
            <person name="Murakami H."/>
            <person name="Hosoyama A."/>
            <person name="Mizutani-Ui Y."/>
            <person name="Takahashi N.K."/>
            <person name="Sawano T."/>
            <person name="Inoue R."/>
            <person name="Kaito C."/>
            <person name="Sekimizu K."/>
            <person name="Hirakawa H."/>
            <person name="Kuhara S."/>
            <person name="Goto S."/>
            <person name="Yabuzaki J."/>
            <person name="Kanehisa M."/>
            <person name="Yamashita A."/>
            <person name="Oshima K."/>
            <person name="Furuya K."/>
            <person name="Yoshino C."/>
            <person name="Shiba T."/>
            <person name="Hattori M."/>
            <person name="Ogasawara N."/>
            <person name="Hayashi H."/>
            <person name="Hiramatsu K."/>
        </authorList>
    </citation>
    <scope>NUCLEOTIDE SEQUENCE [LARGE SCALE GENOMIC DNA]</scope>
    <source>
        <strain>Mu50 / ATCC 700699</strain>
    </source>
</reference>
<organism>
    <name type="scientific">Staphylococcus aureus (strain Mu50 / ATCC 700699)</name>
    <dbReference type="NCBI Taxonomy" id="158878"/>
    <lineage>
        <taxon>Bacteria</taxon>
        <taxon>Bacillati</taxon>
        <taxon>Bacillota</taxon>
        <taxon>Bacilli</taxon>
        <taxon>Bacillales</taxon>
        <taxon>Staphylococcaceae</taxon>
        <taxon>Staphylococcus</taxon>
    </lineage>
</organism>
<comment type="function">
    <text evidence="1">Essential for recycling GMP and indirectly, cGMP.</text>
</comment>
<comment type="catalytic activity">
    <reaction evidence="1">
        <text>GMP + ATP = GDP + ADP</text>
        <dbReference type="Rhea" id="RHEA:20780"/>
        <dbReference type="ChEBI" id="CHEBI:30616"/>
        <dbReference type="ChEBI" id="CHEBI:58115"/>
        <dbReference type="ChEBI" id="CHEBI:58189"/>
        <dbReference type="ChEBI" id="CHEBI:456216"/>
        <dbReference type="EC" id="2.7.4.8"/>
    </reaction>
</comment>
<comment type="subcellular location">
    <subcellularLocation>
        <location evidence="1">Cytoplasm</location>
    </subcellularLocation>
</comment>
<comment type="similarity">
    <text evidence="1">Belongs to the guanylate kinase family.</text>
</comment>
<sequence length="207" mass="24022">MDNEKGLLIVLSGPSGVGKGTVRKRIFEDPSTSYKYSISMTTRQMREGEVDGVDYFFKTRDAFEALIKDDQFIEYAEYVGNYYGTPVQYVKDTMDEGHDVFLEIEVEGAKQVRKKFPDALFIFLAPPSLDHLRERLVGRGTESNEKIQSRINEARKEVEMMNLYDYVVVNDEVELAKNRIQCIVEAEHLKRERVEAKYRKMILEAKK</sequence>
<evidence type="ECO:0000255" key="1">
    <source>
        <dbReference type="HAMAP-Rule" id="MF_00328"/>
    </source>
</evidence>
<protein>
    <recommendedName>
        <fullName evidence="1">Guanylate kinase</fullName>
        <ecNumber evidence="1">2.7.4.8</ecNumber>
    </recommendedName>
    <alternativeName>
        <fullName evidence="1">GMP kinase</fullName>
    </alternativeName>
</protein>